<reference key="1">
    <citation type="journal article" date="1990" name="Proc. Natl. Acad. Sci. U.S.A.">
        <title>Characterization of the gene encoding the hemocyanin subunit e from the tarantula Eurypelma californicum.</title>
        <authorList>
            <person name="Voll W."/>
            <person name="Voit R."/>
        </authorList>
    </citation>
    <scope>NUCLEOTIDE SEQUENCE [GENOMIC DNA]</scope>
</reference>
<reference key="2">
    <citation type="journal article" date="1990" name="J. Biol. Chem.">
        <title>Arthropod hemocyanins. Molecular cloning and sequencing of cDNAs encoding the tarantula hemocyanin subunits a and e.</title>
        <authorList>
            <person name="Voit R."/>
            <person name="Feldmaier-Fuchs G."/>
        </authorList>
    </citation>
    <scope>NUCLEOTIDE SEQUENCE [MRNA]</scope>
</reference>
<reference key="3">
    <citation type="journal article" date="1983" name="Hoppe-Seyler's Z. Physiol. Chem.">
        <title>Hemocyanins in Spiders, XVIII. Complete amino-acid sequence of subunit e from Eurypelma californicum hemocyanin.</title>
        <authorList>
            <person name="Schneider H.-J."/>
            <person name="Drexel R."/>
            <person name="Feldmaier G."/>
            <person name="Linzen B."/>
            <person name="Lottspeich F."/>
            <person name="Henschen A."/>
        </authorList>
    </citation>
    <scope>PROTEIN SEQUENCE OF 2-624</scope>
</reference>
<reference key="4">
    <citation type="journal article" date="1986" name="Eur. J. Biochem.">
        <title>Tarantula hemocyanin mRNA. In vitro translation, cDNA cloning and nucleotide sequence corresponding to subunit e.</title>
        <authorList>
            <person name="Voit R."/>
            <person name="Schneider H.-J."/>
        </authorList>
    </citation>
    <scope>NUCLEOTIDE SEQUENCE [MRNA] OF 75-600</scope>
</reference>
<gene>
    <name type="primary">HCE</name>
</gene>
<protein>
    <recommendedName>
        <fullName>Hemocyanin E chain</fullName>
        <shortName>HcE</shortName>
    </recommendedName>
</protein>
<name>HCYE_APHSP</name>
<dbReference type="EMBL" id="X16894">
    <property type="protein sequence ID" value="CAA34772.1"/>
    <property type="molecule type" value="mRNA"/>
</dbReference>
<dbReference type="EMBL" id="X04291">
    <property type="protein sequence ID" value="CAA27838.1"/>
    <property type="molecule type" value="mRNA"/>
</dbReference>
<dbReference type="EMBL" id="X16650">
    <property type="protein sequence ID" value="CAA34643.1"/>
    <property type="molecule type" value="Genomic_DNA"/>
</dbReference>
<dbReference type="EMBL" id="X16651">
    <property type="protein sequence ID" value="CAA34643.1"/>
    <property type="status" value="JOINED"/>
    <property type="molecule type" value="Genomic_DNA"/>
</dbReference>
<dbReference type="EMBL" id="X16652">
    <property type="protein sequence ID" value="CAA34643.1"/>
    <property type="status" value="JOINED"/>
    <property type="molecule type" value="Genomic_DNA"/>
</dbReference>
<dbReference type="EMBL" id="X16653">
    <property type="protein sequence ID" value="CAA34643.1"/>
    <property type="status" value="JOINED"/>
    <property type="molecule type" value="Genomic_DNA"/>
</dbReference>
<dbReference type="EMBL" id="X16654">
    <property type="protein sequence ID" value="CAA34643.1"/>
    <property type="status" value="JOINED"/>
    <property type="molecule type" value="Genomic_DNA"/>
</dbReference>
<dbReference type="EMBL" id="X16655">
    <property type="protein sequence ID" value="CAA34643.1"/>
    <property type="status" value="JOINED"/>
    <property type="molecule type" value="Genomic_DNA"/>
</dbReference>
<dbReference type="EMBL" id="X16656">
    <property type="protein sequence ID" value="CAA34643.1"/>
    <property type="status" value="JOINED"/>
    <property type="molecule type" value="Genomic_DNA"/>
</dbReference>
<dbReference type="EMBL" id="X16657">
    <property type="protein sequence ID" value="CAA34643.1"/>
    <property type="status" value="JOINED"/>
    <property type="molecule type" value="Genomic_DNA"/>
</dbReference>
<dbReference type="PIR" id="S06701">
    <property type="entry name" value="BHTLE"/>
</dbReference>
<dbReference type="SMR" id="P02242"/>
<dbReference type="GlyCosmos" id="P02242">
    <property type="glycosylation" value="1 site, No reported glycans"/>
</dbReference>
<dbReference type="GO" id="GO:0005576">
    <property type="term" value="C:extracellular region"/>
    <property type="evidence" value="ECO:0007669"/>
    <property type="project" value="UniProtKB-SubCell"/>
</dbReference>
<dbReference type="GO" id="GO:0031404">
    <property type="term" value="F:chloride ion binding"/>
    <property type="evidence" value="ECO:0000250"/>
    <property type="project" value="UniProtKB"/>
</dbReference>
<dbReference type="GO" id="GO:0005507">
    <property type="term" value="F:copper ion binding"/>
    <property type="evidence" value="ECO:0000250"/>
    <property type="project" value="UniProtKB"/>
</dbReference>
<dbReference type="GO" id="GO:0016491">
    <property type="term" value="F:oxidoreductase activity"/>
    <property type="evidence" value="ECO:0007669"/>
    <property type="project" value="InterPro"/>
</dbReference>
<dbReference type="GO" id="GO:0005344">
    <property type="term" value="F:oxygen carrier activity"/>
    <property type="evidence" value="ECO:0007669"/>
    <property type="project" value="UniProtKB-KW"/>
</dbReference>
<dbReference type="FunFam" id="1.10.1280.10:FF:000004">
    <property type="entry name" value="Hemocyanin subunit 2"/>
    <property type="match status" value="1"/>
</dbReference>
<dbReference type="FunFam" id="2.60.40.1520:FF:000001">
    <property type="entry name" value="Hemocyanin subunit 2"/>
    <property type="match status" value="1"/>
</dbReference>
<dbReference type="FunFam" id="1.20.1370.10:FF:000002">
    <property type="entry name" value="Hemocyanin subunit B"/>
    <property type="match status" value="1"/>
</dbReference>
<dbReference type="Gene3D" id="1.10.1280.10">
    <property type="entry name" value="Di-copper center containing domain from catechol oxidase"/>
    <property type="match status" value="1"/>
</dbReference>
<dbReference type="Gene3D" id="2.60.40.1520">
    <property type="entry name" value="Hemocyanin, C-terminal domain"/>
    <property type="match status" value="1"/>
</dbReference>
<dbReference type="Gene3D" id="1.20.1370.10">
    <property type="entry name" value="Hemocyanin, N-terminal domain"/>
    <property type="match status" value="1"/>
</dbReference>
<dbReference type="InterPro" id="IPR008922">
    <property type="entry name" value="Di-copper_centre_dom_sf"/>
</dbReference>
<dbReference type="InterPro" id="IPR013788">
    <property type="entry name" value="Hemocyanin/hexamerin"/>
</dbReference>
<dbReference type="InterPro" id="IPR000896">
    <property type="entry name" value="Hemocyanin/hexamerin_mid_dom"/>
</dbReference>
<dbReference type="InterPro" id="IPR005203">
    <property type="entry name" value="Hemocyanin_C"/>
</dbReference>
<dbReference type="InterPro" id="IPR037020">
    <property type="entry name" value="Hemocyanin_C_sf"/>
</dbReference>
<dbReference type="InterPro" id="IPR005204">
    <property type="entry name" value="Hemocyanin_N"/>
</dbReference>
<dbReference type="InterPro" id="IPR036697">
    <property type="entry name" value="Hemocyanin_N_sf"/>
</dbReference>
<dbReference type="InterPro" id="IPR014756">
    <property type="entry name" value="Ig_E-set"/>
</dbReference>
<dbReference type="InterPro" id="IPR002227">
    <property type="entry name" value="Tyrosinase_Cu-bd"/>
</dbReference>
<dbReference type="PANTHER" id="PTHR11511:SF5">
    <property type="entry name" value="FAT-BODY PROTEIN 1-RELATED"/>
    <property type="match status" value="1"/>
</dbReference>
<dbReference type="PANTHER" id="PTHR11511">
    <property type="entry name" value="LARVAL STORAGE PROTEIN/PHENOLOXIDASE"/>
    <property type="match status" value="1"/>
</dbReference>
<dbReference type="Pfam" id="PF03723">
    <property type="entry name" value="Hemocyanin_C"/>
    <property type="match status" value="1"/>
</dbReference>
<dbReference type="Pfam" id="PF00372">
    <property type="entry name" value="Hemocyanin_M"/>
    <property type="match status" value="1"/>
</dbReference>
<dbReference type="Pfam" id="PF03722">
    <property type="entry name" value="Hemocyanin_N"/>
    <property type="match status" value="1"/>
</dbReference>
<dbReference type="PRINTS" id="PR00187">
    <property type="entry name" value="HAEMOCYANIN"/>
</dbReference>
<dbReference type="SUPFAM" id="SSF48056">
    <property type="entry name" value="Di-copper centre-containing domain"/>
    <property type="match status" value="1"/>
</dbReference>
<dbReference type="SUPFAM" id="SSF81296">
    <property type="entry name" value="E set domains"/>
    <property type="match status" value="1"/>
</dbReference>
<dbReference type="SUPFAM" id="SSF48050">
    <property type="entry name" value="Hemocyanin, N-terminal domain"/>
    <property type="match status" value="1"/>
</dbReference>
<dbReference type="PROSITE" id="PS00209">
    <property type="entry name" value="HEMOCYANIN_1"/>
    <property type="match status" value="1"/>
</dbReference>
<dbReference type="PROSITE" id="PS00210">
    <property type="entry name" value="HEMOCYANIN_2"/>
    <property type="match status" value="1"/>
</dbReference>
<dbReference type="PROSITE" id="PS00498">
    <property type="entry name" value="TYROSINASE_2"/>
    <property type="match status" value="1"/>
</dbReference>
<evidence type="ECO:0000250" key="1"/>
<evidence type="ECO:0000269" key="2">
    <source>
    </source>
</evidence>
<evidence type="ECO:0000305" key="3"/>
<accession>P02242</accession>
<organism>
    <name type="scientific">Aphonopelma sp.</name>
    <name type="common">American tarantula</name>
    <dbReference type="NCBI Taxonomy" id="29932"/>
    <lineage>
        <taxon>Eukaryota</taxon>
        <taxon>Metazoa</taxon>
        <taxon>Ecdysozoa</taxon>
        <taxon>Arthropoda</taxon>
        <taxon>Chelicerata</taxon>
        <taxon>Arachnida</taxon>
        <taxon>Araneae</taxon>
        <taxon>Mygalomorphae</taxon>
        <taxon>Theraphosidae</taxon>
        <taxon>Aphonopelma</taxon>
    </lineage>
</organism>
<proteinExistence type="evidence at protein level"/>
<comment type="function">
    <text>Hemocyanins are copper-containing oxygen carriers occurring freely dissolved in the hemolymph of many mollusks and arthropods.</text>
</comment>
<comment type="subunit">
    <text>Tarantula hemocyanin is a 24-chain polymer with seven different chains identified.</text>
</comment>
<comment type="subcellular location">
    <subcellularLocation>
        <location>Secreted</location>
        <location>Extracellular space</location>
    </subcellularLocation>
</comment>
<comment type="tissue specificity">
    <text>Hemolymph.</text>
</comment>
<comment type="miscellaneous">
    <text>The two copper ions bound each have 3 nitrogen ligands (presumably contributed by His residues) and share a bridging ligand (possibly contributed by a Tyr residue) in addition to binding oxygen.</text>
</comment>
<comment type="similarity">
    <text evidence="3">Belongs to the tyrosinase family. Hemocyanin subfamily.</text>
</comment>
<sequence>MPDKQKQLRVISLFEHMTSINTPLPRDQIDARLHHLGRLPQGELFSCFHEEDLEEATELYKILYTAKDFDEVINLAKQSRTFVNEGLFVYAVSVALLHRDDCKGIVVPAIQEIFPDRFVPTETINLAVKEAANHPDQDISVHVVETGNILDEEYKLAYFKEDVGTNAHHWHWHIVYPATWDPAFMGRMKDRKGELFYYMHQQMCARYDCERLSNGMRRMIPFSNFDEKLEGYSAHLTSLVSGLPYAFRPDGLCLHDLKDIDLKEMFRWRERILDAIDSGYYIDNEGHQVKLDIVDGINVLGALIESSFETKNKLYYGSLHNWGHVMMARLQDPDHRFNENPGVMSDTSTSLRDPIFYRYHRFIDNIFQKYIATLPHYTPEDLTCPGVHVVNVTVNAKVPNVVTTFMKEAELELSYGIDFGSDHSVKVLYRHLDHEPFTYNISVENSSGGAKDVTMRIFLGPKYDELGNRLQPEQQRTLNIELDKFKATLDPGKNVVTRDHRNSTVTVEQSVPVKKLREEGGVAGEYCSCGWPEHMLIPKGNHRGMDFELFVIVTDYAQDAVNGHGENAECVDAVSYCGAKDQKYPDKKPMGFPFDRVIEGLTFEEFLTVSMSCTDVRIKYTDIK</sequence>
<feature type="initiator methionine" description="Removed" evidence="2">
    <location>
        <position position="1"/>
    </location>
</feature>
<feature type="chain" id="PRO_0000204269" description="Hemocyanin E chain">
    <location>
        <begin position="2"/>
        <end position="624"/>
    </location>
</feature>
<feature type="binding site" evidence="3">
    <location>
        <position position="169"/>
    </location>
    <ligand>
        <name>Cu cation</name>
        <dbReference type="ChEBI" id="CHEBI:23378"/>
        <label>1</label>
    </ligand>
</feature>
<feature type="binding site" evidence="3">
    <location>
        <position position="173"/>
    </location>
    <ligand>
        <name>Cu cation</name>
        <dbReference type="ChEBI" id="CHEBI:23378"/>
        <label>1</label>
    </ligand>
</feature>
<feature type="binding site" evidence="3">
    <location>
        <position position="200"/>
    </location>
    <ligand>
        <name>Cu cation</name>
        <dbReference type="ChEBI" id="CHEBI:23378"/>
        <label>1</label>
    </ligand>
</feature>
<feature type="binding site" evidence="3">
    <location>
        <position position="320"/>
    </location>
    <ligand>
        <name>Cu cation</name>
        <dbReference type="ChEBI" id="CHEBI:23378"/>
        <label>2</label>
    </ligand>
</feature>
<feature type="binding site" evidence="3">
    <location>
        <position position="324"/>
    </location>
    <ligand>
        <name>Cu cation</name>
        <dbReference type="ChEBI" id="CHEBI:23378"/>
        <label>2</label>
    </ligand>
</feature>
<feature type="binding site" evidence="3">
    <location>
        <position position="360"/>
    </location>
    <ligand>
        <name>Cu cation</name>
        <dbReference type="ChEBI" id="CHEBI:23378"/>
        <label>2</label>
    </ligand>
</feature>
<feature type="glycosylation site" description="N-linked (GlcNAc...) asparagine" evidence="3">
    <location>
        <position position="445"/>
    </location>
</feature>
<feature type="disulfide bond" evidence="1">
    <location>
        <begin position="529"/>
        <end position="577"/>
    </location>
</feature>
<feature type="sequence conflict" description="In Ref. 3; AA sequence." evidence="3" ref="3">
    <original>D</original>
    <variation>R</variation>
    <location>
        <position position="30"/>
    </location>
</feature>
<feature type="sequence conflict" description="In Ref. 3; AA sequence." evidence="3" ref="3">
    <original>C</original>
    <variation>D</variation>
    <location>
        <position position="47"/>
    </location>
</feature>
<feature type="sequence conflict" description="In Ref. 3; AA sequence." evidence="3" ref="3">
    <original>R</original>
    <variation>K</variation>
    <location>
        <position position="80"/>
    </location>
</feature>
<feature type="sequence conflict" description="In Ref. 3; AA sequence." evidence="3" ref="3">
    <original>A</original>
    <variation>H</variation>
    <location>
        <position position="91"/>
    </location>
</feature>
<feature type="sequence conflict" description="In Ref. 3; AA sequence." evidence="3" ref="3">
    <location>
        <position position="111"/>
    </location>
</feature>
<feature type="sequence conflict" description="In Ref. 1 and 2." evidence="3" ref="1 2">
    <original>K</original>
    <variation>R</variation>
    <location>
        <position position="160"/>
    </location>
</feature>
<feature type="sequence conflict" description="In Ref. 3; AA sequence." evidence="3" ref="3">
    <original>R</original>
    <variation>H</variation>
    <location>
        <position position="217"/>
    </location>
</feature>
<feature type="sequence conflict" description="In Ref. 3; AA sequence." evidence="3" ref="3">
    <original>H</original>
    <variation>M</variation>
    <location>
        <position position="255"/>
    </location>
</feature>
<feature type="sequence conflict" description="In Ref. 3; AA sequence." evidence="3" ref="3">
    <original>F</original>
    <variation>H</variation>
    <location>
        <position position="308"/>
    </location>
</feature>
<feature type="sequence conflict" description="In Ref. 3; AA sequence." evidence="3" ref="3">
    <original>M</original>
    <variation>MK</variation>
    <location>
        <position position="326"/>
    </location>
</feature>
<feature type="sequence conflict" description="In Ref. 3; AA sequence." evidence="3" ref="3">
    <original>CGW</original>
    <variation>DGK</variation>
    <location>
        <begin position="529"/>
        <end position="531"/>
    </location>
</feature>
<feature type="sequence conflict" description="In Ref. 3; AA sequence." evidence="3" ref="3">
    <original>NGH</original>
    <variation>D</variation>
    <location>
        <begin position="562"/>
        <end position="564"/>
    </location>
</feature>
<feature type="sequence conflict" description="In Ref. 2; CAA34772/CAA34643." evidence="3" ref="2">
    <original>F</original>
    <variation>L</variation>
    <location>
        <position position="603"/>
    </location>
</feature>
<feature type="sequence conflict" description="In Ref. 2; CAA34772/CAA34643." evidence="3" ref="2">
    <original>V</original>
    <variation>P</variation>
    <location>
        <position position="609"/>
    </location>
</feature>
<keyword id="KW-0186">Copper</keyword>
<keyword id="KW-0903">Direct protein sequencing</keyword>
<keyword id="KW-1015">Disulfide bond</keyword>
<keyword id="KW-0325">Glycoprotein</keyword>
<keyword id="KW-0479">Metal-binding</keyword>
<keyword id="KW-0561">Oxygen transport</keyword>
<keyword id="KW-0964">Secreted</keyword>
<keyword id="KW-0813">Transport</keyword>